<proteinExistence type="inferred from homology"/>
<organism>
    <name type="scientific">Pichia angusta</name>
    <name type="common">Yeast</name>
    <name type="synonym">Hansenula polymorpha</name>
    <dbReference type="NCBI Taxonomy" id="870730"/>
    <lineage>
        <taxon>Eukaryota</taxon>
        <taxon>Fungi</taxon>
        <taxon>Dikarya</taxon>
        <taxon>Ascomycota</taxon>
        <taxon>Saccharomycotina</taxon>
        <taxon>Pichiomycetes</taxon>
        <taxon>Pichiales</taxon>
        <taxon>Pichiaceae</taxon>
        <taxon>Ogataea</taxon>
    </lineage>
</organism>
<dbReference type="EC" id="3.1.1.3"/>
<dbReference type="EMBL" id="EF107721">
    <property type="protein sequence ID" value="ABO31059.1"/>
    <property type="molecule type" value="Genomic_DNA"/>
</dbReference>
<dbReference type="ESTHER" id="pican-atg15">
    <property type="family name" value="ATG15-related-lipase"/>
</dbReference>
<dbReference type="GlyCosmos" id="A7KAJ9">
    <property type="glycosylation" value="5 sites, No reported glycans"/>
</dbReference>
<dbReference type="GO" id="GO:0032585">
    <property type="term" value="C:multivesicular body membrane"/>
    <property type="evidence" value="ECO:0007669"/>
    <property type="project" value="UniProtKB-SubCell"/>
</dbReference>
<dbReference type="GO" id="GO:0005775">
    <property type="term" value="C:vacuolar lumen"/>
    <property type="evidence" value="ECO:0007669"/>
    <property type="project" value="TreeGrafter"/>
</dbReference>
<dbReference type="GO" id="GO:0004620">
    <property type="term" value="F:phospholipase activity"/>
    <property type="evidence" value="ECO:0007669"/>
    <property type="project" value="TreeGrafter"/>
</dbReference>
<dbReference type="GO" id="GO:0004806">
    <property type="term" value="F:triacylglycerol lipase activity"/>
    <property type="evidence" value="ECO:0007669"/>
    <property type="project" value="UniProtKB-EC"/>
</dbReference>
<dbReference type="GO" id="GO:0034496">
    <property type="term" value="P:multivesicular body membrane disassembly"/>
    <property type="evidence" value="ECO:0007669"/>
    <property type="project" value="TreeGrafter"/>
</dbReference>
<dbReference type="GO" id="GO:0046461">
    <property type="term" value="P:neutral lipid catabolic process"/>
    <property type="evidence" value="ECO:0007669"/>
    <property type="project" value="TreeGrafter"/>
</dbReference>
<dbReference type="GO" id="GO:0006660">
    <property type="term" value="P:phosphatidylserine catabolic process"/>
    <property type="evidence" value="ECO:0007669"/>
    <property type="project" value="TreeGrafter"/>
</dbReference>
<dbReference type="GO" id="GO:0034727">
    <property type="term" value="P:piecemeal microautophagy of the nucleus"/>
    <property type="evidence" value="ECO:0007669"/>
    <property type="project" value="TreeGrafter"/>
</dbReference>
<dbReference type="FunFam" id="3.40.50.1820:FF:000129">
    <property type="entry name" value="Autophagy related lipase Atg15, putative"/>
    <property type="match status" value="1"/>
</dbReference>
<dbReference type="Gene3D" id="3.40.50.1820">
    <property type="entry name" value="alpha/beta hydrolase"/>
    <property type="match status" value="1"/>
</dbReference>
<dbReference type="InterPro" id="IPR029058">
    <property type="entry name" value="AB_hydrolase_fold"/>
</dbReference>
<dbReference type="InterPro" id="IPR050805">
    <property type="entry name" value="ATG15_Lipase"/>
</dbReference>
<dbReference type="InterPro" id="IPR002921">
    <property type="entry name" value="Fungal_lipase-type"/>
</dbReference>
<dbReference type="PANTHER" id="PTHR47175">
    <property type="entry name" value="LIPASE ATG15-RELATED"/>
    <property type="match status" value="1"/>
</dbReference>
<dbReference type="PANTHER" id="PTHR47175:SF2">
    <property type="entry name" value="LIPASE ATG15-RELATED"/>
    <property type="match status" value="1"/>
</dbReference>
<dbReference type="Pfam" id="PF01764">
    <property type="entry name" value="Lipase_3"/>
    <property type="match status" value="1"/>
</dbReference>
<dbReference type="SUPFAM" id="SSF53474">
    <property type="entry name" value="alpha/beta-Hydrolases"/>
    <property type="match status" value="1"/>
</dbReference>
<dbReference type="PROSITE" id="PS00120">
    <property type="entry name" value="LIPASE_SER"/>
    <property type="match status" value="1"/>
</dbReference>
<reference key="1">
    <citation type="journal article" date="2007" name="Autophagy">
        <title>ATG genes involved in non-selective autophagy are conserved from yeast to man, but the selective Cvt and pexophagy pathways also require organism-specific genes.</title>
        <authorList>
            <person name="Meijer W.H."/>
            <person name="van der Klei I.J."/>
            <person name="Veenhuis M."/>
            <person name="Kiel J.A.K.W."/>
        </authorList>
    </citation>
    <scope>NUCLEOTIDE SEQUENCE [GENOMIC DNA]</scope>
    <scope>FUNCTION</scope>
    <source>
        <strain>ATCC 34438 / CBS 4732 / DSM 70277 / JCM 3621 / NBRC 1476 / NRRL Y-5445</strain>
    </source>
</reference>
<accession>A7KAJ9</accession>
<comment type="function">
    <text evidence="1 5">Lipase which is essential for lysis of subvacuolar cytoplasm to vacuole targeted bodies and intravacuolar autophagic bodies. Involved in the lysis of intravacuolar multivesicular body (MVB) vesicles. The intravacuolar membrane disintegration by ATG15 is critical to life span extension (By similarity).</text>
</comment>
<comment type="catalytic activity">
    <reaction>
        <text>a triacylglycerol + H2O = a diacylglycerol + a fatty acid + H(+)</text>
        <dbReference type="Rhea" id="RHEA:12044"/>
        <dbReference type="ChEBI" id="CHEBI:15377"/>
        <dbReference type="ChEBI" id="CHEBI:15378"/>
        <dbReference type="ChEBI" id="CHEBI:17855"/>
        <dbReference type="ChEBI" id="CHEBI:18035"/>
        <dbReference type="ChEBI" id="CHEBI:28868"/>
        <dbReference type="EC" id="3.1.1.3"/>
    </reaction>
</comment>
<comment type="subunit">
    <text evidence="1">Binds to both phosphatidylinositol (PI) and phosphatidylinositol 3,5-bisphosphate (PIP2).</text>
</comment>
<comment type="subcellular location">
    <subcellularLocation>
        <location evidence="2">Endosome</location>
        <location evidence="2">Multivesicular body membrane</location>
        <topology evidence="2">Single-pass type II membrane protein</topology>
    </subcellularLocation>
    <subcellularLocation>
        <location evidence="2">Prevacuolar compartment membrane</location>
        <topology evidence="2">Single-pass type II membrane protein</topology>
    </subcellularLocation>
    <text evidence="2">From ER, targeted to vacuolar lumen at the MVB vesicles via the Golgi and the prevacuolar compartment (PVC).</text>
</comment>
<comment type="similarity">
    <text evidence="6">Belongs to the AB hydrolase superfamily. Lipase family.</text>
</comment>
<evidence type="ECO:0000250" key="1"/>
<evidence type="ECO:0000250" key="2">
    <source>
        <dbReference type="UniProtKB" id="P25641"/>
    </source>
</evidence>
<evidence type="ECO:0000255" key="3"/>
<evidence type="ECO:0000255" key="4">
    <source>
        <dbReference type="PROSITE-ProRule" id="PRU10037"/>
    </source>
</evidence>
<evidence type="ECO:0000269" key="5">
    <source>
    </source>
</evidence>
<evidence type="ECO:0000305" key="6"/>
<protein>
    <recommendedName>
        <fullName>Putative lipase ATG15</fullName>
        <ecNumber>3.1.1.3</ecNumber>
    </recommendedName>
    <alternativeName>
        <fullName>Autophagy-related protein 15</fullName>
    </alternativeName>
</protein>
<keyword id="KW-0072">Autophagy</keyword>
<keyword id="KW-0967">Endosome</keyword>
<keyword id="KW-0325">Glycoprotein</keyword>
<keyword id="KW-0378">Hydrolase</keyword>
<keyword id="KW-0442">Lipid degradation</keyword>
<keyword id="KW-0443">Lipid metabolism</keyword>
<keyword id="KW-0472">Membrane</keyword>
<keyword id="KW-0735">Signal-anchor</keyword>
<keyword id="KW-0812">Transmembrane</keyword>
<keyword id="KW-1133">Transmembrane helix</keyword>
<feature type="chain" id="PRO_0000317969" description="Putative lipase ATG15">
    <location>
        <begin position="1"/>
        <end position="536"/>
    </location>
</feature>
<feature type="topological domain" description="Cytoplasmic" evidence="1">
    <location>
        <begin position="1"/>
        <end position="8"/>
    </location>
</feature>
<feature type="transmembrane region" description="Helical; Signal-anchor for type II membrane protein">
    <location>
        <begin position="9"/>
        <end position="31"/>
    </location>
</feature>
<feature type="topological domain" description="Lumenal" evidence="1">
    <location>
        <begin position="32"/>
        <end position="536"/>
    </location>
</feature>
<feature type="active site" description="Charge relay system" evidence="4">
    <location>
        <position position="309"/>
    </location>
</feature>
<feature type="glycosylation site" description="N-linked (GlcNAc...) asparagine" evidence="3">
    <location>
        <position position="152"/>
    </location>
</feature>
<feature type="glycosylation site" description="N-linked (GlcNAc...) asparagine" evidence="3">
    <location>
        <position position="187"/>
    </location>
</feature>
<feature type="glycosylation site" description="N-linked (GlcNAc...) asparagine" evidence="3">
    <location>
        <position position="293"/>
    </location>
</feature>
<feature type="glycosylation site" description="N-linked (GlcNAc...) asparagine" evidence="3">
    <location>
        <position position="426"/>
    </location>
</feature>
<feature type="glycosylation site" description="N-linked (GlcNAc...) asparagine" evidence="3">
    <location>
        <position position="516"/>
    </location>
</feature>
<gene>
    <name type="primary">ATG15</name>
</gene>
<sequence length="536" mass="60260">MGNPTLMRWPVTRILVLGLVVTVLYKAMAIYSSRRAPVQVCFTSPSSAFKIKHIFHNAADGRTHKRLDIDDEFLSIYNSARSQMAHIEDMDLFTVSPFEQELVIRHTEGQTVRLADRSPDFVESYLDYALENGPASRMIEFDWQQESLLIPNMSDKETIVSLALMSSDAYVGLPTDADWNDVGDKYNESERFGWENGGVRGHVFTDPEETIVIISIKGTSAAGLNTGGDGQTVEQDKTNDNLLFSCCCARVSSLWKTVCDCYEESYTCNQNCLEQELRRPDRYYKAVLEIYRNVTHMYPESEIWVTGHSLGGSLSSLLGRTFGLPAVSFEAVGELLATRRLHLPMPPGLPEEMENIWHVGNTADPIFMGVCNGASSTCSLAGYALETQCHSGKKCVYDVVNDLGWHVNLLNHRIRTIISDVLMVYNDTAECVKPPPCYDCYNWRFVDHSGDRYRTTASSPSPIPSDPPGRRCLKRTWYGRCYEWADDPSAVKTTFATSTIYRKTSDISTSTHTGGNTTCIRRSWLGYCLEYGPELR</sequence>
<name>ATG15_PICAN</name>